<dbReference type="EC" id="2.7.7.72" evidence="1"/>
<dbReference type="EMBL" id="FM242711">
    <property type="protein sequence ID" value="CAS05680.1"/>
    <property type="molecule type" value="Genomic_DNA"/>
</dbReference>
<dbReference type="RefSeq" id="WP_003726621.1">
    <property type="nucleotide sequence ID" value="NC_012488.1"/>
</dbReference>
<dbReference type="SMR" id="C1KWK5"/>
<dbReference type="KEGG" id="lmc:Lm4b_01922"/>
<dbReference type="HOGENOM" id="CLU_015961_3_0_9"/>
<dbReference type="GO" id="GO:0005524">
    <property type="term" value="F:ATP binding"/>
    <property type="evidence" value="ECO:0007669"/>
    <property type="project" value="UniProtKB-UniRule"/>
</dbReference>
<dbReference type="GO" id="GO:0004810">
    <property type="term" value="F:CCA tRNA nucleotidyltransferase activity"/>
    <property type="evidence" value="ECO:0007669"/>
    <property type="project" value="UniProtKB-UniRule"/>
</dbReference>
<dbReference type="GO" id="GO:0000287">
    <property type="term" value="F:magnesium ion binding"/>
    <property type="evidence" value="ECO:0007669"/>
    <property type="project" value="UniProtKB-UniRule"/>
</dbReference>
<dbReference type="GO" id="GO:0000049">
    <property type="term" value="F:tRNA binding"/>
    <property type="evidence" value="ECO:0007669"/>
    <property type="project" value="UniProtKB-UniRule"/>
</dbReference>
<dbReference type="GO" id="GO:0042245">
    <property type="term" value="P:RNA repair"/>
    <property type="evidence" value="ECO:0007669"/>
    <property type="project" value="UniProtKB-KW"/>
</dbReference>
<dbReference type="GO" id="GO:0001680">
    <property type="term" value="P:tRNA 3'-terminal CCA addition"/>
    <property type="evidence" value="ECO:0007669"/>
    <property type="project" value="UniProtKB-UniRule"/>
</dbReference>
<dbReference type="CDD" id="cd05398">
    <property type="entry name" value="NT_ClassII-CCAase"/>
    <property type="match status" value="1"/>
</dbReference>
<dbReference type="FunFam" id="3.30.460.10:FF:000057">
    <property type="entry name" value="CCA-adding enzyme"/>
    <property type="match status" value="1"/>
</dbReference>
<dbReference type="Gene3D" id="1.10.110.30">
    <property type="match status" value="1"/>
</dbReference>
<dbReference type="Gene3D" id="1.10.246.80">
    <property type="match status" value="1"/>
</dbReference>
<dbReference type="Gene3D" id="1.20.58.560">
    <property type="match status" value="1"/>
</dbReference>
<dbReference type="Gene3D" id="3.30.460.10">
    <property type="entry name" value="Beta Polymerase, domain 2"/>
    <property type="match status" value="1"/>
</dbReference>
<dbReference type="HAMAP" id="MF_01263">
    <property type="entry name" value="CCA_bact_type3"/>
    <property type="match status" value="1"/>
</dbReference>
<dbReference type="InterPro" id="IPR050264">
    <property type="entry name" value="Bact_CCA-adding_enz_type3_sf"/>
</dbReference>
<dbReference type="InterPro" id="IPR032810">
    <property type="entry name" value="CCA-adding_enz_C"/>
</dbReference>
<dbReference type="InterPro" id="IPR023068">
    <property type="entry name" value="CCA-adding_enz_firmicutes"/>
</dbReference>
<dbReference type="InterPro" id="IPR043519">
    <property type="entry name" value="NT_sf"/>
</dbReference>
<dbReference type="InterPro" id="IPR002646">
    <property type="entry name" value="PolA_pol_head_dom"/>
</dbReference>
<dbReference type="InterPro" id="IPR032828">
    <property type="entry name" value="PolyA_RNA-bd"/>
</dbReference>
<dbReference type="NCBIfam" id="NF009814">
    <property type="entry name" value="PRK13299.1"/>
    <property type="match status" value="1"/>
</dbReference>
<dbReference type="PANTHER" id="PTHR46173">
    <property type="entry name" value="CCA TRNA NUCLEOTIDYLTRANSFERASE 1, MITOCHONDRIAL"/>
    <property type="match status" value="1"/>
</dbReference>
<dbReference type="PANTHER" id="PTHR46173:SF1">
    <property type="entry name" value="CCA TRNA NUCLEOTIDYLTRANSFERASE 1, MITOCHONDRIAL"/>
    <property type="match status" value="1"/>
</dbReference>
<dbReference type="Pfam" id="PF01743">
    <property type="entry name" value="PolyA_pol"/>
    <property type="match status" value="1"/>
</dbReference>
<dbReference type="Pfam" id="PF12627">
    <property type="entry name" value="PolyA_pol_RNAbd"/>
    <property type="match status" value="1"/>
</dbReference>
<dbReference type="Pfam" id="PF13735">
    <property type="entry name" value="tRNA_NucTran2_2"/>
    <property type="match status" value="1"/>
</dbReference>
<dbReference type="SUPFAM" id="SSF81301">
    <property type="entry name" value="Nucleotidyltransferase"/>
    <property type="match status" value="1"/>
</dbReference>
<dbReference type="SUPFAM" id="SSF81891">
    <property type="entry name" value="Poly A polymerase C-terminal region-like"/>
    <property type="match status" value="1"/>
</dbReference>
<keyword id="KW-0067">ATP-binding</keyword>
<keyword id="KW-0460">Magnesium</keyword>
<keyword id="KW-0479">Metal-binding</keyword>
<keyword id="KW-0547">Nucleotide-binding</keyword>
<keyword id="KW-0548">Nucleotidyltransferase</keyword>
<keyword id="KW-0692">RNA repair</keyword>
<keyword id="KW-0694">RNA-binding</keyword>
<keyword id="KW-0808">Transferase</keyword>
<keyword id="KW-0819">tRNA processing</keyword>
<organism>
    <name type="scientific">Listeria monocytogenes serotype 4b (strain CLIP80459)</name>
    <dbReference type="NCBI Taxonomy" id="568819"/>
    <lineage>
        <taxon>Bacteria</taxon>
        <taxon>Bacillati</taxon>
        <taxon>Bacillota</taxon>
        <taxon>Bacilli</taxon>
        <taxon>Bacillales</taxon>
        <taxon>Listeriaceae</taxon>
        <taxon>Listeria</taxon>
    </lineage>
</organism>
<comment type="function">
    <text evidence="1">Catalyzes the addition and repair of the essential 3'-terminal CCA sequence in tRNAs without using a nucleic acid template. Adds these three nucleotides in the order of C, C, and A to the tRNA nucleotide-73, using CTP and ATP as substrates and producing inorganic pyrophosphate. tRNA 3'-terminal CCA addition is required both for tRNA processing and repair. Also involved in tRNA surveillance by mediating tandem CCA addition to generate a CCACCA at the 3' terminus of unstable tRNAs. While stable tRNAs receive only 3'-terminal CCA, unstable tRNAs are marked with CCACCA and rapidly degraded.</text>
</comment>
<comment type="catalytic activity">
    <reaction evidence="1">
        <text>a tRNA precursor + 2 CTP + ATP = a tRNA with a 3' CCA end + 3 diphosphate</text>
        <dbReference type="Rhea" id="RHEA:14433"/>
        <dbReference type="Rhea" id="RHEA-COMP:10465"/>
        <dbReference type="Rhea" id="RHEA-COMP:10468"/>
        <dbReference type="ChEBI" id="CHEBI:30616"/>
        <dbReference type="ChEBI" id="CHEBI:33019"/>
        <dbReference type="ChEBI" id="CHEBI:37563"/>
        <dbReference type="ChEBI" id="CHEBI:74896"/>
        <dbReference type="ChEBI" id="CHEBI:83071"/>
        <dbReference type="EC" id="2.7.7.72"/>
    </reaction>
</comment>
<comment type="catalytic activity">
    <reaction evidence="1">
        <text>a tRNA with a 3' CCA end + 2 CTP + ATP = a tRNA with a 3' CCACCA end + 3 diphosphate</text>
        <dbReference type="Rhea" id="RHEA:76235"/>
        <dbReference type="Rhea" id="RHEA-COMP:10468"/>
        <dbReference type="Rhea" id="RHEA-COMP:18655"/>
        <dbReference type="ChEBI" id="CHEBI:30616"/>
        <dbReference type="ChEBI" id="CHEBI:33019"/>
        <dbReference type="ChEBI" id="CHEBI:37563"/>
        <dbReference type="ChEBI" id="CHEBI:83071"/>
        <dbReference type="ChEBI" id="CHEBI:195187"/>
    </reaction>
    <physiologicalReaction direction="left-to-right" evidence="1">
        <dbReference type="Rhea" id="RHEA:76236"/>
    </physiologicalReaction>
</comment>
<comment type="cofactor">
    <cofactor evidence="1">
        <name>Mg(2+)</name>
        <dbReference type="ChEBI" id="CHEBI:18420"/>
    </cofactor>
</comment>
<comment type="subunit">
    <text evidence="1">Homodimer.</text>
</comment>
<comment type="miscellaneous">
    <text evidence="1">A single active site specifically recognizes both ATP and CTP and is responsible for their addition.</text>
</comment>
<comment type="similarity">
    <text evidence="1">Belongs to the tRNA nucleotidyltransferase/poly(A) polymerase family. Bacterial CCA-adding enzyme type 3 subfamily.</text>
</comment>
<evidence type="ECO:0000255" key="1">
    <source>
        <dbReference type="HAMAP-Rule" id="MF_01263"/>
    </source>
</evidence>
<name>CCA_LISMC</name>
<accession>C1KWK5</accession>
<proteinExistence type="inferred from homology"/>
<reference key="1">
    <citation type="journal article" date="2012" name="BMC Genomics">
        <title>Comparative genomics and transcriptomics of lineages I, II, and III strains of Listeria monocytogenes.</title>
        <authorList>
            <person name="Hain T."/>
            <person name="Ghai R."/>
            <person name="Billion A."/>
            <person name="Kuenne C.T."/>
            <person name="Steinweg C."/>
            <person name="Izar B."/>
            <person name="Mohamed W."/>
            <person name="Mraheil M."/>
            <person name="Domann E."/>
            <person name="Schaffrath S."/>
            <person name="Karst U."/>
            <person name="Goesmann A."/>
            <person name="Oehm S."/>
            <person name="Puhler A."/>
            <person name="Merkl R."/>
            <person name="Vorwerk S."/>
            <person name="Glaser P."/>
            <person name="Garrido P."/>
            <person name="Rusniok C."/>
            <person name="Buchrieser C."/>
            <person name="Goebel W."/>
            <person name="Chakraborty T."/>
        </authorList>
    </citation>
    <scope>NUCLEOTIDE SEQUENCE [LARGE SCALE GENOMIC DNA]</scope>
    <source>
        <strain>CLIP80459</strain>
    </source>
</reference>
<protein>
    <recommendedName>
        <fullName evidence="1">CCA-adding enzyme</fullName>
        <ecNumber evidence="1">2.7.7.72</ecNumber>
    </recommendedName>
    <alternativeName>
        <fullName evidence="1">CCA tRNA nucleotidyltransferase</fullName>
    </alternativeName>
    <alternativeName>
        <fullName evidence="1">tRNA CCA-pyrophosphorylase</fullName>
    </alternativeName>
    <alternativeName>
        <fullName evidence="1">tRNA adenylyl-/cytidylyl- transferase</fullName>
    </alternativeName>
    <alternativeName>
        <fullName evidence="1">tRNA nucleotidyltransferase</fullName>
    </alternativeName>
    <alternativeName>
        <fullName evidence="1">tRNA-NT</fullName>
    </alternativeName>
</protein>
<sequence>MNDVFLKALPVLQKLTTAGFEAYFVGGSVRDYLLNRTISDVDIATSAFPEEVKEIFQTSYDTGIAHGTVTVRENNEFYEVTTFRTEGTYEDFRRPSEVTFIRSLEEDLKRRDFTMNAIAMDEHFALQDPFSGQLAIQNKEIKAVGKASERFHEDALRMMRAVRFLSQLDFELDKETEKALESQIELLQHTSVERITVEWLKMMKGKAAKRAIELLLKVKMETYLPGLKDEKSALSEFASWDWEKRTTEESIWLGLVVAVKPNNVNAFLKAWKLPNKTIQLVNKAYQYALNMKETWLTEELYHAGKAVFSLVNELNVIRGQENNQHKVSQAYEALPIHSKKDLAITGADLLKWSGESAGPWVKETLDKVECGVLSNEINNEKIQIKRWLGYHEE</sequence>
<gene>
    <name evidence="1" type="primary">cca</name>
    <name type="ordered locus">Lm4b_01922</name>
</gene>
<feature type="chain" id="PRO_1000214139" description="CCA-adding enzyme">
    <location>
        <begin position="1"/>
        <end position="393"/>
    </location>
</feature>
<feature type="binding site" evidence="1">
    <location>
        <position position="27"/>
    </location>
    <ligand>
        <name>ATP</name>
        <dbReference type="ChEBI" id="CHEBI:30616"/>
    </ligand>
</feature>
<feature type="binding site" evidence="1">
    <location>
        <position position="27"/>
    </location>
    <ligand>
        <name>CTP</name>
        <dbReference type="ChEBI" id="CHEBI:37563"/>
    </ligand>
</feature>
<feature type="binding site" evidence="1">
    <location>
        <position position="30"/>
    </location>
    <ligand>
        <name>ATP</name>
        <dbReference type="ChEBI" id="CHEBI:30616"/>
    </ligand>
</feature>
<feature type="binding site" evidence="1">
    <location>
        <position position="30"/>
    </location>
    <ligand>
        <name>CTP</name>
        <dbReference type="ChEBI" id="CHEBI:37563"/>
    </ligand>
</feature>
<feature type="binding site" evidence="1">
    <location>
        <position position="40"/>
    </location>
    <ligand>
        <name>Mg(2+)</name>
        <dbReference type="ChEBI" id="CHEBI:18420"/>
    </ligand>
</feature>
<feature type="binding site" evidence="1">
    <location>
        <position position="42"/>
    </location>
    <ligand>
        <name>Mg(2+)</name>
        <dbReference type="ChEBI" id="CHEBI:18420"/>
    </ligand>
</feature>
<feature type="binding site" evidence="1">
    <location>
        <position position="111"/>
    </location>
    <ligand>
        <name>ATP</name>
        <dbReference type="ChEBI" id="CHEBI:30616"/>
    </ligand>
</feature>
<feature type="binding site" evidence="1">
    <location>
        <position position="111"/>
    </location>
    <ligand>
        <name>CTP</name>
        <dbReference type="ChEBI" id="CHEBI:37563"/>
    </ligand>
</feature>
<feature type="binding site" evidence="1">
    <location>
        <position position="154"/>
    </location>
    <ligand>
        <name>ATP</name>
        <dbReference type="ChEBI" id="CHEBI:30616"/>
    </ligand>
</feature>
<feature type="binding site" evidence="1">
    <location>
        <position position="154"/>
    </location>
    <ligand>
        <name>CTP</name>
        <dbReference type="ChEBI" id="CHEBI:37563"/>
    </ligand>
</feature>
<feature type="binding site" evidence="1">
    <location>
        <position position="157"/>
    </location>
    <ligand>
        <name>ATP</name>
        <dbReference type="ChEBI" id="CHEBI:30616"/>
    </ligand>
</feature>
<feature type="binding site" evidence="1">
    <location>
        <position position="157"/>
    </location>
    <ligand>
        <name>CTP</name>
        <dbReference type="ChEBI" id="CHEBI:37563"/>
    </ligand>
</feature>
<feature type="binding site" evidence="1">
    <location>
        <position position="160"/>
    </location>
    <ligand>
        <name>ATP</name>
        <dbReference type="ChEBI" id="CHEBI:30616"/>
    </ligand>
</feature>
<feature type="binding site" evidence="1">
    <location>
        <position position="160"/>
    </location>
    <ligand>
        <name>CTP</name>
        <dbReference type="ChEBI" id="CHEBI:37563"/>
    </ligand>
</feature>
<feature type="binding site" evidence="1">
    <location>
        <position position="163"/>
    </location>
    <ligand>
        <name>ATP</name>
        <dbReference type="ChEBI" id="CHEBI:30616"/>
    </ligand>
</feature>
<feature type="binding site" evidence="1">
    <location>
        <position position="163"/>
    </location>
    <ligand>
        <name>CTP</name>
        <dbReference type="ChEBI" id="CHEBI:37563"/>
    </ligand>
</feature>